<sequence>MARLKEIYRKEIAPKLKEELKLGNVMEVPRVTKITLNMGLGEAIGDKKVIENAVADLEKITGQKVVVTYARKSIAGFKVREGWPIGVKVTLRRDRMYEFLDRLLSISLPRVRDFRGLNAKSFDGRGNYSMGVKEQIIFPEIDYDKIDALRGLDITLTTTAKNDDEGRALLRAFKFPFRN</sequence>
<protein>
    <recommendedName>
        <fullName evidence="1">Large ribosomal subunit protein uL5</fullName>
    </recommendedName>
    <alternativeName>
        <fullName evidence="2">50S ribosomal protein L5</fullName>
    </alternativeName>
</protein>
<gene>
    <name evidence="1" type="primary">rplE</name>
    <name type="ordered locus">PSPTO_0638</name>
</gene>
<organism>
    <name type="scientific">Pseudomonas syringae pv. tomato (strain ATCC BAA-871 / DC3000)</name>
    <dbReference type="NCBI Taxonomy" id="223283"/>
    <lineage>
        <taxon>Bacteria</taxon>
        <taxon>Pseudomonadati</taxon>
        <taxon>Pseudomonadota</taxon>
        <taxon>Gammaproteobacteria</taxon>
        <taxon>Pseudomonadales</taxon>
        <taxon>Pseudomonadaceae</taxon>
        <taxon>Pseudomonas</taxon>
    </lineage>
</organism>
<accession>Q889V9</accession>
<proteinExistence type="inferred from homology"/>
<evidence type="ECO:0000255" key="1">
    <source>
        <dbReference type="HAMAP-Rule" id="MF_01333"/>
    </source>
</evidence>
<evidence type="ECO:0000305" key="2"/>
<keyword id="KW-1185">Reference proteome</keyword>
<keyword id="KW-0687">Ribonucleoprotein</keyword>
<keyword id="KW-0689">Ribosomal protein</keyword>
<keyword id="KW-0694">RNA-binding</keyword>
<keyword id="KW-0699">rRNA-binding</keyword>
<keyword id="KW-0820">tRNA-binding</keyword>
<dbReference type="EMBL" id="AE016853">
    <property type="protein sequence ID" value="AAO54180.1"/>
    <property type="molecule type" value="Genomic_DNA"/>
</dbReference>
<dbReference type="RefSeq" id="NP_790485.1">
    <property type="nucleotide sequence ID" value="NC_004578.1"/>
</dbReference>
<dbReference type="RefSeq" id="WP_005768935.1">
    <property type="nucleotide sequence ID" value="NC_004578.1"/>
</dbReference>
<dbReference type="SMR" id="Q889V9"/>
<dbReference type="STRING" id="223283.PSPTO_0638"/>
<dbReference type="GeneID" id="1182258"/>
<dbReference type="KEGG" id="pst:PSPTO_0638"/>
<dbReference type="PATRIC" id="fig|223283.9.peg.644"/>
<dbReference type="eggNOG" id="COG0094">
    <property type="taxonomic scope" value="Bacteria"/>
</dbReference>
<dbReference type="HOGENOM" id="CLU_061015_2_1_6"/>
<dbReference type="OrthoDB" id="9806626at2"/>
<dbReference type="PhylomeDB" id="Q889V9"/>
<dbReference type="Proteomes" id="UP000002515">
    <property type="component" value="Chromosome"/>
</dbReference>
<dbReference type="GO" id="GO:1990904">
    <property type="term" value="C:ribonucleoprotein complex"/>
    <property type="evidence" value="ECO:0007669"/>
    <property type="project" value="UniProtKB-KW"/>
</dbReference>
<dbReference type="GO" id="GO:0005840">
    <property type="term" value="C:ribosome"/>
    <property type="evidence" value="ECO:0007669"/>
    <property type="project" value="UniProtKB-KW"/>
</dbReference>
<dbReference type="GO" id="GO:0019843">
    <property type="term" value="F:rRNA binding"/>
    <property type="evidence" value="ECO:0007669"/>
    <property type="project" value="UniProtKB-UniRule"/>
</dbReference>
<dbReference type="GO" id="GO:0003735">
    <property type="term" value="F:structural constituent of ribosome"/>
    <property type="evidence" value="ECO:0007669"/>
    <property type="project" value="InterPro"/>
</dbReference>
<dbReference type="GO" id="GO:0000049">
    <property type="term" value="F:tRNA binding"/>
    <property type="evidence" value="ECO:0007669"/>
    <property type="project" value="UniProtKB-UniRule"/>
</dbReference>
<dbReference type="GO" id="GO:0006412">
    <property type="term" value="P:translation"/>
    <property type="evidence" value="ECO:0007669"/>
    <property type="project" value="UniProtKB-UniRule"/>
</dbReference>
<dbReference type="FunFam" id="3.30.1440.10:FF:000001">
    <property type="entry name" value="50S ribosomal protein L5"/>
    <property type="match status" value="1"/>
</dbReference>
<dbReference type="Gene3D" id="3.30.1440.10">
    <property type="match status" value="1"/>
</dbReference>
<dbReference type="HAMAP" id="MF_01333_B">
    <property type="entry name" value="Ribosomal_uL5_B"/>
    <property type="match status" value="1"/>
</dbReference>
<dbReference type="InterPro" id="IPR002132">
    <property type="entry name" value="Ribosomal_uL5"/>
</dbReference>
<dbReference type="InterPro" id="IPR020930">
    <property type="entry name" value="Ribosomal_uL5_bac-type"/>
</dbReference>
<dbReference type="InterPro" id="IPR031309">
    <property type="entry name" value="Ribosomal_uL5_C"/>
</dbReference>
<dbReference type="InterPro" id="IPR020929">
    <property type="entry name" value="Ribosomal_uL5_CS"/>
</dbReference>
<dbReference type="InterPro" id="IPR022803">
    <property type="entry name" value="Ribosomal_uL5_dom_sf"/>
</dbReference>
<dbReference type="InterPro" id="IPR031310">
    <property type="entry name" value="Ribosomal_uL5_N"/>
</dbReference>
<dbReference type="NCBIfam" id="NF000585">
    <property type="entry name" value="PRK00010.1"/>
    <property type="match status" value="1"/>
</dbReference>
<dbReference type="PANTHER" id="PTHR11994">
    <property type="entry name" value="60S RIBOSOMAL PROTEIN L11-RELATED"/>
    <property type="match status" value="1"/>
</dbReference>
<dbReference type="Pfam" id="PF00281">
    <property type="entry name" value="Ribosomal_L5"/>
    <property type="match status" value="1"/>
</dbReference>
<dbReference type="Pfam" id="PF00673">
    <property type="entry name" value="Ribosomal_L5_C"/>
    <property type="match status" value="1"/>
</dbReference>
<dbReference type="PIRSF" id="PIRSF002161">
    <property type="entry name" value="Ribosomal_L5"/>
    <property type="match status" value="1"/>
</dbReference>
<dbReference type="SUPFAM" id="SSF55282">
    <property type="entry name" value="RL5-like"/>
    <property type="match status" value="1"/>
</dbReference>
<dbReference type="PROSITE" id="PS00358">
    <property type="entry name" value="RIBOSOMAL_L5"/>
    <property type="match status" value="1"/>
</dbReference>
<feature type="chain" id="PRO_0000124972" description="Large ribosomal subunit protein uL5">
    <location>
        <begin position="1"/>
        <end position="179"/>
    </location>
</feature>
<comment type="function">
    <text evidence="1">This is one of the proteins that bind and probably mediate the attachment of the 5S RNA into the large ribosomal subunit, where it forms part of the central protuberance. In the 70S ribosome it contacts protein S13 of the 30S subunit (bridge B1b), connecting the 2 subunits; this bridge is implicated in subunit movement. Contacts the P site tRNA; the 5S rRNA and some of its associated proteins might help stabilize positioning of ribosome-bound tRNAs.</text>
</comment>
<comment type="subunit">
    <text evidence="1">Part of the 50S ribosomal subunit; part of the 5S rRNA/L5/L18/L25 subcomplex. Contacts the 5S rRNA and the P site tRNA. Forms a bridge to the 30S subunit in the 70S ribosome.</text>
</comment>
<comment type="similarity">
    <text evidence="1">Belongs to the universal ribosomal protein uL5 family.</text>
</comment>
<reference key="1">
    <citation type="journal article" date="2003" name="Proc. Natl. Acad. Sci. U.S.A.">
        <title>The complete genome sequence of the Arabidopsis and tomato pathogen Pseudomonas syringae pv. tomato DC3000.</title>
        <authorList>
            <person name="Buell C.R."/>
            <person name="Joardar V."/>
            <person name="Lindeberg M."/>
            <person name="Selengut J."/>
            <person name="Paulsen I.T."/>
            <person name="Gwinn M.L."/>
            <person name="Dodson R.J."/>
            <person name="DeBoy R.T."/>
            <person name="Durkin A.S."/>
            <person name="Kolonay J.F."/>
            <person name="Madupu R."/>
            <person name="Daugherty S.C."/>
            <person name="Brinkac L.M."/>
            <person name="Beanan M.J."/>
            <person name="Haft D.H."/>
            <person name="Nelson W.C."/>
            <person name="Davidsen T.M."/>
            <person name="Zafar N."/>
            <person name="Zhou L."/>
            <person name="Liu J."/>
            <person name="Yuan Q."/>
            <person name="Khouri H.M."/>
            <person name="Fedorova N.B."/>
            <person name="Tran B."/>
            <person name="Russell D."/>
            <person name="Berry K.J."/>
            <person name="Utterback T.R."/>
            <person name="Van Aken S.E."/>
            <person name="Feldblyum T.V."/>
            <person name="D'Ascenzo M."/>
            <person name="Deng W.-L."/>
            <person name="Ramos A.R."/>
            <person name="Alfano J.R."/>
            <person name="Cartinhour S."/>
            <person name="Chatterjee A.K."/>
            <person name="Delaney T.P."/>
            <person name="Lazarowitz S.G."/>
            <person name="Martin G.B."/>
            <person name="Schneider D.J."/>
            <person name="Tang X."/>
            <person name="Bender C.L."/>
            <person name="White O."/>
            <person name="Fraser C.M."/>
            <person name="Collmer A."/>
        </authorList>
    </citation>
    <scope>NUCLEOTIDE SEQUENCE [LARGE SCALE GENOMIC DNA]</scope>
    <source>
        <strain>ATCC BAA-871 / DC3000</strain>
    </source>
</reference>
<name>RL5_PSESM</name>